<reference key="1">
    <citation type="submission" date="2005-01" db="EMBL/GenBank/DDBJ databases">
        <title>Mapping of porcine CGI-58 gene.</title>
        <authorList>
            <person name="Xia T."/>
            <person name="Yang Z.Q."/>
        </authorList>
    </citation>
    <scope>NUCLEOTIDE SEQUENCE [MRNA]</scope>
</reference>
<organism>
    <name type="scientific">Sus scrofa</name>
    <name type="common">Pig</name>
    <dbReference type="NCBI Taxonomy" id="9823"/>
    <lineage>
        <taxon>Eukaryota</taxon>
        <taxon>Metazoa</taxon>
        <taxon>Chordata</taxon>
        <taxon>Craniata</taxon>
        <taxon>Vertebrata</taxon>
        <taxon>Euteleostomi</taxon>
        <taxon>Mammalia</taxon>
        <taxon>Eutheria</taxon>
        <taxon>Laurasiatheria</taxon>
        <taxon>Artiodactyla</taxon>
        <taxon>Suina</taxon>
        <taxon>Suidae</taxon>
        <taxon>Sus</taxon>
    </lineage>
</organism>
<gene>
    <name evidence="2" type="primary">ABHD5</name>
</gene>
<proteinExistence type="evidence at transcript level"/>
<dbReference type="EC" id="2.3.1.51" evidence="2"/>
<dbReference type="EMBL" id="AY902463">
    <property type="protein sequence ID" value="AAW82452.1"/>
    <property type="molecule type" value="mRNA"/>
</dbReference>
<dbReference type="RefSeq" id="NP_001012407.1">
    <property type="nucleotide sequence ID" value="NM_001012407.1"/>
</dbReference>
<dbReference type="SMR" id="Q5EE05"/>
<dbReference type="FunCoup" id="Q5EE05">
    <property type="interactions" value="810"/>
</dbReference>
<dbReference type="STRING" id="9823.ENSSSCP00000012044"/>
<dbReference type="ESTHER" id="pig-abhd5">
    <property type="family name" value="CGI-58_ABHD5_ABHD4"/>
</dbReference>
<dbReference type="MEROPS" id="S33.975"/>
<dbReference type="PaxDb" id="9823-ENSSSCP00000012044"/>
<dbReference type="PeptideAtlas" id="Q5EE05"/>
<dbReference type="Ensembl" id="ENSSSCT00105057272">
    <property type="protein sequence ID" value="ENSSSCP00105040359"/>
    <property type="gene ID" value="ENSSSCG00105030028"/>
</dbReference>
<dbReference type="GeneID" id="497624"/>
<dbReference type="KEGG" id="ssc:497624"/>
<dbReference type="CTD" id="51099"/>
<dbReference type="eggNOG" id="KOG4409">
    <property type="taxonomic scope" value="Eukaryota"/>
</dbReference>
<dbReference type="InParanoid" id="Q5EE05"/>
<dbReference type="OrthoDB" id="7457040at2759"/>
<dbReference type="Proteomes" id="UP000008227">
    <property type="component" value="Unplaced"/>
</dbReference>
<dbReference type="Proteomes" id="UP000314985">
    <property type="component" value="Unplaced"/>
</dbReference>
<dbReference type="Proteomes" id="UP000694570">
    <property type="component" value="Unplaced"/>
</dbReference>
<dbReference type="Proteomes" id="UP000694571">
    <property type="component" value="Unplaced"/>
</dbReference>
<dbReference type="Proteomes" id="UP000694720">
    <property type="component" value="Unplaced"/>
</dbReference>
<dbReference type="Proteomes" id="UP000694722">
    <property type="component" value="Unplaced"/>
</dbReference>
<dbReference type="Proteomes" id="UP000694723">
    <property type="component" value="Unplaced"/>
</dbReference>
<dbReference type="Proteomes" id="UP000694724">
    <property type="component" value="Unplaced"/>
</dbReference>
<dbReference type="Proteomes" id="UP000694725">
    <property type="component" value="Unplaced"/>
</dbReference>
<dbReference type="Proteomes" id="UP000694726">
    <property type="component" value="Unplaced"/>
</dbReference>
<dbReference type="Proteomes" id="UP000694727">
    <property type="component" value="Unplaced"/>
</dbReference>
<dbReference type="Proteomes" id="UP000694728">
    <property type="component" value="Unplaced"/>
</dbReference>
<dbReference type="GO" id="GO:0005829">
    <property type="term" value="C:cytosol"/>
    <property type="evidence" value="ECO:0000250"/>
    <property type="project" value="UniProtKB"/>
</dbReference>
<dbReference type="GO" id="GO:0005811">
    <property type="term" value="C:lipid droplet"/>
    <property type="evidence" value="ECO:0000250"/>
    <property type="project" value="UniProtKB"/>
</dbReference>
<dbReference type="GO" id="GO:0005739">
    <property type="term" value="C:mitochondrion"/>
    <property type="evidence" value="ECO:0000318"/>
    <property type="project" value="GO_Central"/>
</dbReference>
<dbReference type="GO" id="GO:0003841">
    <property type="term" value="F:1-acylglycerol-3-phosphate O-acyltransferase activity"/>
    <property type="evidence" value="ECO:0000250"/>
    <property type="project" value="UniProtKB"/>
</dbReference>
<dbReference type="GO" id="GO:0052689">
    <property type="term" value="F:carboxylic ester hydrolase activity"/>
    <property type="evidence" value="ECO:0000318"/>
    <property type="project" value="GO_Central"/>
</dbReference>
<dbReference type="GO" id="GO:0042171">
    <property type="term" value="F:lysophosphatidic acid acyltransferase activity"/>
    <property type="evidence" value="ECO:0000318"/>
    <property type="project" value="GO_Central"/>
</dbReference>
<dbReference type="GO" id="GO:0030154">
    <property type="term" value="P:cell differentiation"/>
    <property type="evidence" value="ECO:0007669"/>
    <property type="project" value="UniProtKB-KW"/>
</dbReference>
<dbReference type="GO" id="GO:0006631">
    <property type="term" value="P:fatty acid metabolic process"/>
    <property type="evidence" value="ECO:0007669"/>
    <property type="project" value="UniProtKB-KW"/>
</dbReference>
<dbReference type="GO" id="GO:0055088">
    <property type="term" value="P:lipid homeostasis"/>
    <property type="evidence" value="ECO:0000318"/>
    <property type="project" value="GO_Central"/>
</dbReference>
<dbReference type="GO" id="GO:0010891">
    <property type="term" value="P:negative regulation of triglyceride storage"/>
    <property type="evidence" value="ECO:0000250"/>
    <property type="project" value="UniProtKB"/>
</dbReference>
<dbReference type="GO" id="GO:0006654">
    <property type="term" value="P:phosphatidic acid biosynthetic process"/>
    <property type="evidence" value="ECO:0000250"/>
    <property type="project" value="UniProtKB"/>
</dbReference>
<dbReference type="GO" id="GO:0010898">
    <property type="term" value="P:positive regulation of triglyceride catabolic process"/>
    <property type="evidence" value="ECO:0000250"/>
    <property type="project" value="UniProtKB"/>
</dbReference>
<dbReference type="FunFam" id="3.40.50.1820:FF:000019">
    <property type="entry name" value="1-acylglycerol-3-phosphate O-acyltransferase ABHD5"/>
    <property type="match status" value="1"/>
</dbReference>
<dbReference type="Gene3D" id="3.40.50.1820">
    <property type="entry name" value="alpha/beta hydrolase"/>
    <property type="match status" value="1"/>
</dbReference>
<dbReference type="InterPro" id="IPR000073">
    <property type="entry name" value="AB_hydrolase_1"/>
</dbReference>
<dbReference type="InterPro" id="IPR029058">
    <property type="entry name" value="AB_hydrolase_fold"/>
</dbReference>
<dbReference type="PANTHER" id="PTHR42886:SF34">
    <property type="entry name" value="1-ACYLGLYCEROL-3-PHOSPHATE O-ACYLTRANSFERASE ABHD5"/>
    <property type="match status" value="1"/>
</dbReference>
<dbReference type="PANTHER" id="PTHR42886">
    <property type="entry name" value="RE40534P-RELATED"/>
    <property type="match status" value="1"/>
</dbReference>
<dbReference type="Pfam" id="PF00561">
    <property type="entry name" value="Abhydrolase_1"/>
    <property type="match status" value="1"/>
</dbReference>
<dbReference type="PRINTS" id="PR00111">
    <property type="entry name" value="ABHYDROLASE"/>
</dbReference>
<dbReference type="SUPFAM" id="SSF53474">
    <property type="entry name" value="alpha/beta-Hydrolases"/>
    <property type="match status" value="1"/>
</dbReference>
<accession>Q5EE05</accession>
<comment type="function">
    <text evidence="2 3">Coenzyme A-dependent lysophosphatidic acid acyltransferase that catalyzes the transfer of an acyl group on a lysophosphatidic acid. Functions preferentially with 1-oleoyl-lysophosphatidic acid followed by 1-palmitoyl-lysophosphatidic acid, 1-stearoyl-lysophosphatidic acid and 1-arachidonoyl-lysophosphatidic acid as lipid acceptor. Functions preferentially with arachidonoyl-CoA followed by oleoyl-CoA as acyl group donors (By similarity). Functions in phosphatidic acid biosynthesis (By similarity). May regulate the cellular storage of triacylglycerol through activation of the phospholipase PNPLA2 (By similarity). Involved in keratinocyte differentiation (By similarity). Regulates lipid droplet fusion (By similarity).</text>
</comment>
<comment type="catalytic activity">
    <reaction evidence="2">
        <text>a 1-acyl-sn-glycero-3-phosphate + an acyl-CoA = a 1,2-diacyl-sn-glycero-3-phosphate + CoA</text>
        <dbReference type="Rhea" id="RHEA:19709"/>
        <dbReference type="ChEBI" id="CHEBI:57287"/>
        <dbReference type="ChEBI" id="CHEBI:57970"/>
        <dbReference type="ChEBI" id="CHEBI:58342"/>
        <dbReference type="ChEBI" id="CHEBI:58608"/>
        <dbReference type="EC" id="2.3.1.51"/>
    </reaction>
    <physiologicalReaction direction="left-to-right" evidence="2">
        <dbReference type="Rhea" id="RHEA:19710"/>
    </physiologicalReaction>
</comment>
<comment type="catalytic activity">
    <reaction evidence="3">
        <text>1-(9Z-octadecenoyl)-sn-glycero-3-phosphate + (9Z)-octadecenoyl-CoA = 1,2-di-(9Z-octadecenoyl)-sn-glycero-3-phosphate + CoA</text>
        <dbReference type="Rhea" id="RHEA:37131"/>
        <dbReference type="ChEBI" id="CHEBI:57287"/>
        <dbReference type="ChEBI" id="CHEBI:57387"/>
        <dbReference type="ChEBI" id="CHEBI:74544"/>
        <dbReference type="ChEBI" id="CHEBI:74546"/>
    </reaction>
    <physiologicalReaction direction="left-to-right" evidence="3">
        <dbReference type="Rhea" id="RHEA:37132"/>
    </physiologicalReaction>
</comment>
<comment type="catalytic activity">
    <reaction evidence="3">
        <text>1-(9Z-octadecenoyl)-sn-glycero-3-phosphate + hexadecanoyl-CoA = 1-(9Z)-octadecenoyl-2-hexadecanoyl-sn-glycero-3-phosphate + CoA</text>
        <dbReference type="Rhea" id="RHEA:37143"/>
        <dbReference type="ChEBI" id="CHEBI:57287"/>
        <dbReference type="ChEBI" id="CHEBI:57379"/>
        <dbReference type="ChEBI" id="CHEBI:74544"/>
        <dbReference type="ChEBI" id="CHEBI:74551"/>
    </reaction>
    <physiologicalReaction direction="left-to-right" evidence="3">
        <dbReference type="Rhea" id="RHEA:37144"/>
    </physiologicalReaction>
</comment>
<comment type="catalytic activity">
    <reaction evidence="3">
        <text>1-(9Z-octadecenoyl)-sn-glycero-3-phosphate + octadecanoyl-CoA = 1-(9Z-octadecenoyl)-2-octadecanoyl-sn-glycero-3-phosphate + CoA</text>
        <dbReference type="Rhea" id="RHEA:37147"/>
        <dbReference type="ChEBI" id="CHEBI:57287"/>
        <dbReference type="ChEBI" id="CHEBI:57394"/>
        <dbReference type="ChEBI" id="CHEBI:74544"/>
        <dbReference type="ChEBI" id="CHEBI:74552"/>
    </reaction>
    <physiologicalReaction direction="left-to-right" evidence="3">
        <dbReference type="Rhea" id="RHEA:37148"/>
    </physiologicalReaction>
</comment>
<comment type="catalytic activity">
    <reaction evidence="3">
        <text>1-(9Z-octadecenoyl)-sn-glycero-3-phosphate + (5Z,8Z,11Z,14Z)-eicosatetraenoyl-CoA = 1-(9Z)-octadecenoyl-2-(5Z,8Z,11Z,14Z)-eicosatetraenoyl-sn-glycero-3-phosphate + CoA</text>
        <dbReference type="Rhea" id="RHEA:37443"/>
        <dbReference type="ChEBI" id="CHEBI:57287"/>
        <dbReference type="ChEBI" id="CHEBI:57368"/>
        <dbReference type="ChEBI" id="CHEBI:74544"/>
        <dbReference type="ChEBI" id="CHEBI:74928"/>
    </reaction>
    <physiologicalReaction direction="left-to-right" evidence="3">
        <dbReference type="Rhea" id="RHEA:37444"/>
    </physiologicalReaction>
</comment>
<comment type="catalytic activity">
    <reaction evidence="3">
        <text>eicosanoyl-CoA + 1-(9Z-octadecenoyl)-sn-glycero-3-phosphate = 1-(9Z)-octadecenoyl-2-eicosanoyl-sn-glycero-3-phosphate + CoA</text>
        <dbReference type="Rhea" id="RHEA:37451"/>
        <dbReference type="ChEBI" id="CHEBI:57287"/>
        <dbReference type="ChEBI" id="CHEBI:57380"/>
        <dbReference type="ChEBI" id="CHEBI:74544"/>
        <dbReference type="ChEBI" id="CHEBI:74937"/>
    </reaction>
    <physiologicalReaction direction="left-to-right" evidence="3">
        <dbReference type="Rhea" id="RHEA:37452"/>
    </physiologicalReaction>
</comment>
<comment type="catalytic activity">
    <reaction evidence="3">
        <text>1-hexadecanoyl-sn-glycero-3-phosphate + (9Z)-octadecenoyl-CoA = 1-hexadecanoyl-2-(9Z-octadecenoyl)-sn-glycero-3-phosphate + CoA</text>
        <dbReference type="Rhea" id="RHEA:33187"/>
        <dbReference type="ChEBI" id="CHEBI:57287"/>
        <dbReference type="ChEBI" id="CHEBI:57387"/>
        <dbReference type="ChEBI" id="CHEBI:57518"/>
        <dbReference type="ChEBI" id="CHEBI:64839"/>
    </reaction>
    <physiologicalReaction direction="left-to-right" evidence="3">
        <dbReference type="Rhea" id="RHEA:33188"/>
    </physiologicalReaction>
</comment>
<comment type="catalytic activity">
    <reaction evidence="3">
        <text>1-octadecanoyl-sn-glycero-3-phosphate + (9Z)-octadecenoyl-CoA = 1-octadecanoyl-2-(9Z-octadecenoyl)-sn-glycero-3-phosphate + CoA</text>
        <dbReference type="Rhea" id="RHEA:37163"/>
        <dbReference type="ChEBI" id="CHEBI:57287"/>
        <dbReference type="ChEBI" id="CHEBI:57387"/>
        <dbReference type="ChEBI" id="CHEBI:74560"/>
        <dbReference type="ChEBI" id="CHEBI:74565"/>
    </reaction>
    <physiologicalReaction direction="left-to-right" evidence="3">
        <dbReference type="Rhea" id="RHEA:37164"/>
    </physiologicalReaction>
</comment>
<comment type="catalytic activity">
    <reaction evidence="3">
        <text>1-(5Z,8Z,11Z,14Z-eicosatetraenoyl)-sn-glycero-3-phosphate + (9Z)-octadecenoyl-CoA = 1-(5Z,8Z,11Z,14Z)-eicosatetraenoyl-2-(9Z)-octadecenoyl-sn-glycero-3-phosphate + CoA</text>
        <dbReference type="Rhea" id="RHEA:37455"/>
        <dbReference type="ChEBI" id="CHEBI:57287"/>
        <dbReference type="ChEBI" id="CHEBI:57387"/>
        <dbReference type="ChEBI" id="CHEBI:74938"/>
        <dbReference type="ChEBI" id="CHEBI:74941"/>
    </reaction>
    <physiologicalReaction direction="left-to-right" evidence="3">
        <dbReference type="Rhea" id="RHEA:37456"/>
    </physiologicalReaction>
</comment>
<comment type="activity regulation">
    <text evidence="3">Acyltransferase activity is inhibited by detergents such as Triton X-100 and 3-[(3-cholamidopropyl)dimethylammonio]-1-propanesulfonate (CHAPS). Acyltransferase activity is inhibited by the presence of magnesium and calcium.</text>
</comment>
<comment type="subunit">
    <text evidence="1">Interacts with ADRP, PLIN and PNPLA2. Interacts with PLIN5; promotes interaction with PNPLA2 (By similarity).</text>
</comment>
<comment type="subcellular location">
    <subcellularLocation>
        <location evidence="1">Cytoplasm</location>
    </subcellularLocation>
    <subcellularLocation>
        <location evidence="1">Lipid droplet</location>
    </subcellularLocation>
    <text evidence="1">Colocalized with PLIN and ADRP on the surface of lipid droplets. The localization is dependent upon the metabolic status of the adipocytes and the activity of PKA (By similarity).</text>
</comment>
<comment type="domain">
    <text evidence="1">The HXXXXD motif is essential for acyltransferase activity and may constitute the binding site for the phosphate moiety of the glycerol-3-phosphate.</text>
</comment>
<comment type="similarity">
    <text evidence="5">Belongs to the peptidase S33 family. ABHD4/ABHD5 subfamily.</text>
</comment>
<evidence type="ECO:0000250" key="1"/>
<evidence type="ECO:0000250" key="2">
    <source>
        <dbReference type="UniProtKB" id="Q8WTS1"/>
    </source>
</evidence>
<evidence type="ECO:0000250" key="3">
    <source>
        <dbReference type="UniProtKB" id="Q9DBL9"/>
    </source>
</evidence>
<evidence type="ECO:0000255" key="4"/>
<evidence type="ECO:0000305" key="5"/>
<name>ABHD5_PIG</name>
<feature type="initiator methionine" description="Removed" evidence="2">
    <location>
        <position position="1"/>
    </location>
</feature>
<feature type="chain" id="PRO_0000080868" description="1-acylglycerol-3-phosphate O-acyltransferase ABHD5">
    <location>
        <begin position="2"/>
        <end position="349"/>
    </location>
</feature>
<feature type="domain" description="AB hydrolase-1" evidence="4">
    <location>
        <begin position="77"/>
        <end position="185"/>
    </location>
</feature>
<feature type="short sequence motif" description="HXXXXD motif">
    <location>
        <begin position="327"/>
        <end position="332"/>
    </location>
</feature>
<feature type="modified residue" description="N-acetylalanine" evidence="2">
    <location>
        <position position="2"/>
    </location>
</feature>
<protein>
    <recommendedName>
        <fullName evidence="2">1-acylglycerol-3-phosphate O-acyltransferase ABHD5</fullName>
        <ecNumber evidence="2">2.3.1.51</ecNumber>
    </recommendedName>
    <alternativeName>
        <fullName>Abhydrolase domain-containing protein 5</fullName>
    </alternativeName>
</protein>
<keyword id="KW-0007">Acetylation</keyword>
<keyword id="KW-0012">Acyltransferase</keyword>
<keyword id="KW-0963">Cytoplasm</keyword>
<keyword id="KW-0221">Differentiation</keyword>
<keyword id="KW-0276">Fatty acid metabolism</keyword>
<keyword id="KW-0444">Lipid biosynthesis</keyword>
<keyword id="KW-0551">Lipid droplet</keyword>
<keyword id="KW-0443">Lipid metabolism</keyword>
<keyword id="KW-0594">Phospholipid biosynthesis</keyword>
<keyword id="KW-1208">Phospholipid metabolism</keyword>
<keyword id="KW-1185">Reference proteome</keyword>
<keyword id="KW-0808">Transferase</keyword>
<sequence length="349" mass="39004">MAAEEEEMDSTDACERSGWLTGWLPTWCPTSTSHLKEAEEKILKCVPCIYKKGPVRISNGNKIWTLKLSHNISNKIPLVLLHGFGGGLGLWALNFGDLCTNRPVYAFDLLGFGRSSRPRFDTDAEEVENQFVESIEEWRCALGLDKVILLGHNLGGFLAAAYSLKYPSRVSHLILVEPWGFPERPDLADQERPIPVWIRALGAALTPFNPLAGLRIAGPFGLSLVQRLRPDFKRKYSSMFEDDTVTEYIYHCNVQTPSGETAFKNMTIPYGWAKRPMLHRIGKMNPDIPVSVIYGARSCIDGNSGTSIQSLRPHSYVKTIAILGAGHYVYADQPEDFNLKVKEICDTVD</sequence>